<dbReference type="EC" id="2.7.13.3" evidence="11"/>
<dbReference type="EMBL" id="HQ188282">
    <property type="protein sequence ID" value="ADQ42400.1"/>
    <property type="molecule type" value="Genomic_DNA"/>
</dbReference>
<dbReference type="EMBL" id="CP003117">
    <property type="protein sequence ID" value="AET63831.1"/>
    <property type="molecule type" value="Genomic_DNA"/>
</dbReference>
<dbReference type="RefSeq" id="WP_014586016.1">
    <property type="nucleotide sequence ID" value="NC_017527.1"/>
</dbReference>
<dbReference type="STRING" id="1110509.Mhar_0446"/>
<dbReference type="GeneID" id="25395387"/>
<dbReference type="KEGG" id="mhi:Mhar_0446"/>
<dbReference type="PATRIC" id="fig|1110509.7.peg.498"/>
<dbReference type="HOGENOM" id="CLU_009587_1_0_2"/>
<dbReference type="OrthoDB" id="342253at2157"/>
<dbReference type="Proteomes" id="UP000005877">
    <property type="component" value="Chromosome"/>
</dbReference>
<dbReference type="GO" id="GO:0005886">
    <property type="term" value="C:plasma membrane"/>
    <property type="evidence" value="ECO:0007669"/>
    <property type="project" value="UniProtKB-SubCell"/>
</dbReference>
<dbReference type="GO" id="GO:0000156">
    <property type="term" value="F:phosphorelay response regulator activity"/>
    <property type="evidence" value="ECO:0007669"/>
    <property type="project" value="TreeGrafter"/>
</dbReference>
<dbReference type="GO" id="GO:0000155">
    <property type="term" value="F:phosphorelay sensor kinase activity"/>
    <property type="evidence" value="ECO:0007669"/>
    <property type="project" value="InterPro"/>
</dbReference>
<dbReference type="GO" id="GO:0030295">
    <property type="term" value="F:protein kinase activator activity"/>
    <property type="evidence" value="ECO:0007669"/>
    <property type="project" value="TreeGrafter"/>
</dbReference>
<dbReference type="GO" id="GO:0007234">
    <property type="term" value="P:osmosensory signaling via phosphorelay pathway"/>
    <property type="evidence" value="ECO:0007669"/>
    <property type="project" value="TreeGrafter"/>
</dbReference>
<dbReference type="CDD" id="cd06225">
    <property type="entry name" value="HAMP"/>
    <property type="match status" value="1"/>
</dbReference>
<dbReference type="CDD" id="cd16921">
    <property type="entry name" value="HATPase_FilI-like"/>
    <property type="match status" value="1"/>
</dbReference>
<dbReference type="CDD" id="cd00082">
    <property type="entry name" value="HisKA"/>
    <property type="match status" value="1"/>
</dbReference>
<dbReference type="CDD" id="cd00130">
    <property type="entry name" value="PAS"/>
    <property type="match status" value="1"/>
</dbReference>
<dbReference type="FunFam" id="3.30.565.10:FF:000006">
    <property type="entry name" value="Sensor histidine kinase WalK"/>
    <property type="match status" value="1"/>
</dbReference>
<dbReference type="Gene3D" id="1.10.287.130">
    <property type="match status" value="1"/>
</dbReference>
<dbReference type="Gene3D" id="3.30.450.40">
    <property type="match status" value="1"/>
</dbReference>
<dbReference type="Gene3D" id="6.10.340.10">
    <property type="match status" value="1"/>
</dbReference>
<dbReference type="Gene3D" id="3.30.565.10">
    <property type="entry name" value="Histidine kinase-like ATPase, C-terminal domain"/>
    <property type="match status" value="1"/>
</dbReference>
<dbReference type="Gene3D" id="3.30.450.20">
    <property type="entry name" value="PAS domain"/>
    <property type="match status" value="1"/>
</dbReference>
<dbReference type="InterPro" id="IPR007892">
    <property type="entry name" value="CHASE4"/>
</dbReference>
<dbReference type="InterPro" id="IPR003018">
    <property type="entry name" value="GAF"/>
</dbReference>
<dbReference type="InterPro" id="IPR029016">
    <property type="entry name" value="GAF-like_dom_sf"/>
</dbReference>
<dbReference type="InterPro" id="IPR003660">
    <property type="entry name" value="HAMP_dom"/>
</dbReference>
<dbReference type="InterPro" id="IPR036890">
    <property type="entry name" value="HATPase_C_sf"/>
</dbReference>
<dbReference type="InterPro" id="IPR005467">
    <property type="entry name" value="His_kinase_dom"/>
</dbReference>
<dbReference type="InterPro" id="IPR003661">
    <property type="entry name" value="HisK_dim/P_dom"/>
</dbReference>
<dbReference type="InterPro" id="IPR036097">
    <property type="entry name" value="HisK_dim/P_sf"/>
</dbReference>
<dbReference type="InterPro" id="IPR052545">
    <property type="entry name" value="Light-responsive_reg"/>
</dbReference>
<dbReference type="InterPro" id="IPR000014">
    <property type="entry name" value="PAS"/>
</dbReference>
<dbReference type="InterPro" id="IPR000700">
    <property type="entry name" value="PAS-assoc_C"/>
</dbReference>
<dbReference type="InterPro" id="IPR035965">
    <property type="entry name" value="PAS-like_dom_sf"/>
</dbReference>
<dbReference type="InterPro" id="IPR013656">
    <property type="entry name" value="PAS_4"/>
</dbReference>
<dbReference type="InterPro" id="IPR004358">
    <property type="entry name" value="Sig_transdc_His_kin-like_C"/>
</dbReference>
<dbReference type="NCBIfam" id="TIGR00229">
    <property type="entry name" value="sensory_box"/>
    <property type="match status" value="1"/>
</dbReference>
<dbReference type="PANTHER" id="PTHR42878:SF15">
    <property type="entry name" value="BACTERIOPHYTOCHROME"/>
    <property type="match status" value="1"/>
</dbReference>
<dbReference type="PANTHER" id="PTHR42878">
    <property type="entry name" value="TWO-COMPONENT HISTIDINE KINASE"/>
    <property type="match status" value="1"/>
</dbReference>
<dbReference type="Pfam" id="PF05228">
    <property type="entry name" value="CHASE4"/>
    <property type="match status" value="1"/>
</dbReference>
<dbReference type="Pfam" id="PF01590">
    <property type="entry name" value="GAF"/>
    <property type="match status" value="1"/>
</dbReference>
<dbReference type="Pfam" id="PF02518">
    <property type="entry name" value="HATPase_c"/>
    <property type="match status" value="1"/>
</dbReference>
<dbReference type="Pfam" id="PF00512">
    <property type="entry name" value="HisKA"/>
    <property type="match status" value="1"/>
</dbReference>
<dbReference type="Pfam" id="PF08448">
    <property type="entry name" value="PAS_4"/>
    <property type="match status" value="1"/>
</dbReference>
<dbReference type="PRINTS" id="PR00344">
    <property type="entry name" value="BCTRLSENSOR"/>
</dbReference>
<dbReference type="SMART" id="SM00065">
    <property type="entry name" value="GAF"/>
    <property type="match status" value="1"/>
</dbReference>
<dbReference type="SMART" id="SM00304">
    <property type="entry name" value="HAMP"/>
    <property type="match status" value="1"/>
</dbReference>
<dbReference type="SMART" id="SM00387">
    <property type="entry name" value="HATPase_c"/>
    <property type="match status" value="1"/>
</dbReference>
<dbReference type="SMART" id="SM00388">
    <property type="entry name" value="HisKA"/>
    <property type="match status" value="1"/>
</dbReference>
<dbReference type="SUPFAM" id="SSF55874">
    <property type="entry name" value="ATPase domain of HSP90 chaperone/DNA topoisomerase II/histidine kinase"/>
    <property type="match status" value="1"/>
</dbReference>
<dbReference type="SUPFAM" id="SSF55781">
    <property type="entry name" value="GAF domain-like"/>
    <property type="match status" value="1"/>
</dbReference>
<dbReference type="SUPFAM" id="SSF47384">
    <property type="entry name" value="Homodimeric domain of signal transducing histidine kinase"/>
    <property type="match status" value="1"/>
</dbReference>
<dbReference type="SUPFAM" id="SSF55785">
    <property type="entry name" value="PYP-like sensor domain (PAS domain)"/>
    <property type="match status" value="1"/>
</dbReference>
<dbReference type="PROSITE" id="PS50885">
    <property type="entry name" value="HAMP"/>
    <property type="match status" value="1"/>
</dbReference>
<dbReference type="PROSITE" id="PS50109">
    <property type="entry name" value="HIS_KIN"/>
    <property type="match status" value="1"/>
</dbReference>
<dbReference type="PROSITE" id="PS50113">
    <property type="entry name" value="PAC"/>
    <property type="match status" value="1"/>
</dbReference>
<dbReference type="PROSITE" id="PS50112">
    <property type="entry name" value="PAS"/>
    <property type="match status" value="1"/>
</dbReference>
<feature type="chain" id="PRO_0000433370" description="Methanogenesis regulatory histidine kinase FilI">
    <location>
        <begin position="1"/>
        <end position="886"/>
    </location>
</feature>
<feature type="transmembrane region" description="Helical" evidence="1">
    <location>
        <begin position="7"/>
        <end position="27"/>
    </location>
</feature>
<feature type="transmembrane region" description="Helical" evidence="1">
    <location>
        <begin position="270"/>
        <end position="290"/>
    </location>
</feature>
<feature type="domain" description="HAMP" evidence="2">
    <location>
        <begin position="290"/>
        <end position="344"/>
    </location>
</feature>
<feature type="domain" description="PAS" evidence="4">
    <location>
        <begin position="349"/>
        <end position="419"/>
    </location>
</feature>
<feature type="domain" description="PAC" evidence="5">
    <location>
        <begin position="421"/>
        <end position="473"/>
    </location>
</feature>
<feature type="domain" description="Histidine kinase" evidence="3">
    <location>
        <begin position="674"/>
        <end position="886"/>
    </location>
</feature>
<feature type="modified residue" description="Phosphohistidine; by autocatalysis" evidence="3">
    <location>
        <position position="677"/>
    </location>
</feature>
<evidence type="ECO:0000255" key="1"/>
<evidence type="ECO:0000255" key="2">
    <source>
        <dbReference type="PROSITE-ProRule" id="PRU00102"/>
    </source>
</evidence>
<evidence type="ECO:0000255" key="3">
    <source>
        <dbReference type="PROSITE-ProRule" id="PRU00107"/>
    </source>
</evidence>
<evidence type="ECO:0000255" key="4">
    <source>
        <dbReference type="PROSITE-ProRule" id="PRU00140"/>
    </source>
</evidence>
<evidence type="ECO:0000255" key="5">
    <source>
        <dbReference type="PROSITE-ProRule" id="PRU00141"/>
    </source>
</evidence>
<evidence type="ECO:0000269" key="6">
    <source>
    </source>
</evidence>
<evidence type="ECO:0000269" key="7">
    <source>
    </source>
</evidence>
<evidence type="ECO:0000303" key="8">
    <source>
    </source>
</evidence>
<evidence type="ECO:0000303" key="9">
    <source>
    </source>
</evidence>
<evidence type="ECO:0000305" key="10"/>
<evidence type="ECO:0000305" key="11">
    <source>
    </source>
</evidence>
<evidence type="ECO:0000312" key="12">
    <source>
        <dbReference type="EMBL" id="AET63831.1"/>
    </source>
</evidence>
<proteinExistence type="evidence at protein level"/>
<protein>
    <recommendedName>
        <fullName evidence="10">Methanogenesis regulatory histidine kinase FilI</fullName>
        <ecNumber evidence="11">2.7.13.3</ecNumber>
    </recommendedName>
    <alternativeName>
        <fullName evidence="9">Acyl-homoserine-lactone synthase</fullName>
        <shortName evidence="9">AHL synthase</shortName>
    </alternativeName>
</protein>
<name>FILI_METH6</name>
<comment type="function">
    <text evidence="7">Member of the two-component regulatory system FilI/FilRs, which is involved in the regulation of methanogenesis. Autophosphorylates and specifically transfers the phosphoryl group to both FilR1 and FilR2.</text>
</comment>
<comment type="function">
    <text evidence="6">Could also catalyze the synthesis of the quorum sensing (QS) signal molecules carboxyl-acyl homoserine lactones (AHLs), which regulate the transition of the cellular morphology from short cells to filaments and of the carbon metabolic flux from biomass formation to methane production.</text>
</comment>
<comment type="catalytic activity">
    <reaction evidence="11">
        <text>ATP + protein L-histidine = ADP + protein N-phospho-L-histidine.</text>
        <dbReference type="EC" id="2.7.13.3"/>
    </reaction>
</comment>
<comment type="subcellular location">
    <subcellularLocation>
        <location evidence="11">Cell membrane</location>
        <topology evidence="1">Multi-pass membrane protein</topology>
    </subcellularLocation>
</comment>
<comment type="induction">
    <text evidence="6 7">Transcriptionally regulated by FilR1 (PubMed:24748383). Transcript level increases with cell density (PubMed:22237544).</text>
</comment>
<comment type="PTM">
    <text evidence="7">Autophosphorylated.</text>
</comment>
<reference key="1">
    <citation type="journal article" date="2012" name="ISME J.">
        <title>Acyl homoserine lactone-based quorum sensing in a methanogenic archaeon.</title>
        <authorList>
            <person name="Zhang G."/>
            <person name="Zhang F."/>
            <person name="Ding G."/>
            <person name="Li J."/>
            <person name="Guo X."/>
            <person name="Zhu J."/>
            <person name="Zhou L."/>
            <person name="Cai S."/>
            <person name="Liu X."/>
            <person name="Luo Y."/>
            <person name="Zhang G."/>
            <person name="Shi W."/>
            <person name="Dong X."/>
        </authorList>
    </citation>
    <scope>NUCLEOTIDE SEQUENCE [GENOMIC DNA]</scope>
    <scope>FUNCTION AS A AHL SYNTHASE</scope>
    <scope>INDUCTION</scope>
    <source>
        <strain>6Ac</strain>
    </source>
</reference>
<reference key="2">
    <citation type="journal article" date="2012" name="PLoS ONE">
        <title>The genome characteristics and predicted function of methyl-group oxidation pathway in the obligate aceticlastic methanogens, Methanosaeta spp.</title>
        <authorList>
            <person name="Zhu J."/>
            <person name="Zheng H."/>
            <person name="Ai G."/>
            <person name="Zhang G."/>
            <person name="Liu D."/>
            <person name="Liu X."/>
            <person name="Dong X."/>
        </authorList>
    </citation>
    <scope>NUCLEOTIDE SEQUENCE [LARGE SCALE GENOMIC DNA]</scope>
    <source>
        <strain>6Ac</strain>
    </source>
</reference>
<reference key="3">
    <citation type="journal article" date="2014" name="PLoS ONE">
        <title>Characterization of an archaeal two-component system that regulates methanogenesis in Methanosaeta harundinacea.</title>
        <authorList>
            <person name="Li J."/>
            <person name="Zheng X."/>
            <person name="Guo X."/>
            <person name="Qi L."/>
            <person name="Dong X."/>
        </authorList>
    </citation>
    <scope>FUNCTION AS A KINASE</scope>
    <scope>CATALYTIC ACTIVITY</scope>
    <scope>INDUCTION</scope>
    <scope>AUTOPHOSPHORYLATION</scope>
    <source>
        <strain>6Ac</strain>
    </source>
</reference>
<keyword id="KW-1003">Cell membrane</keyword>
<keyword id="KW-0418">Kinase</keyword>
<keyword id="KW-0472">Membrane</keyword>
<keyword id="KW-0597">Phosphoprotein</keyword>
<keyword id="KW-1185">Reference proteome</keyword>
<keyword id="KW-0808">Transferase</keyword>
<keyword id="KW-0812">Transmembrane</keyword>
<keyword id="KW-1133">Transmembrane helix</keyword>
<organism>
    <name type="scientific">Methanothrix harundinacea (strain 6Ac)</name>
    <name type="common">Methanosaeta harundinacea</name>
    <dbReference type="NCBI Taxonomy" id="1110509"/>
    <lineage>
        <taxon>Archaea</taxon>
        <taxon>Methanobacteriati</taxon>
        <taxon>Methanobacteriota</taxon>
        <taxon>Stenosarchaea group</taxon>
        <taxon>Methanomicrobia</taxon>
        <taxon>Methanotrichales</taxon>
        <taxon>Methanotrichaceae</taxon>
        <taxon>Methanothrix</taxon>
    </lineage>
</organism>
<sequence>MTLRRSILAFTGGMILVLALICSTFMCHMMMGTLSDLEEAYVHQKVDGTLFYLQEDLSSLKRAAEDWGHWNDTRDFVIGENDQYIQDNLNSWTLSGLDVDFMIYYDRSGNLFYSRAFNHATGEEVPAPGRLLSLAKDDPLIAHSSPEDGLTGIVSDPEGLLLVSSTTILDSHWKGPISGTFIVGRRLDGARAEGLARLSGIDLRMAATAPVGESEGTNSKTSLLIVKEDSDTLIATKTIDDVYGNPTVLLEAQVPREIRSRGLETIRRQVVGIFLASLLFGGLILLFLELSILMPLATITSSVEAIREQEKGQGSRIPTVGPAELATLAESINEMLDHLESYNQKLAMSEKRFRTIVDTAHDCIFIKDPKSRYVLVNPVMERIFQLPASKMLGERDEVFFSAETAARIREKDAGVLSGEPFVGEVSAHTRAGSSMTFHAVKVPLRDDRGQVTGICGIARDITDIKEAGVELLKRDRLLSASAAASYSLLVNYDIDQIIIDVLQLLGEAVEADRAYIFENQTVDGEVLMSQRYEWTKGEVEPQINNPVLQSLPYHPDSSTFYEIISRGRPYVGLVKDLPESERAYLAPQGIVSILIVPIFVEDRLWGFIGFDDCHRERFWSNGEISVLQVAAGSIGGAFIRSRTRADLVRAKGELQERIGEVEAKNAEMERFVYTVSHDLRSPLVTIQGFVGFLREDLSALDGDKIKIDLAMIEEAVLKMDHLLKDTLSLSRVGRVVNPPEEGSFGEIVHEALSQASGELRSRGIKVSLAEGWPRVRVDRLRVQEALTNLLDNSIKYMGDRPHPEIEVGWRPEGEETVFFVRDNGIGMDPDQWEKVFGLFYKIDPDSEGSGVGLAIVRRIIEVHGGRIWIESEEGRGTCVLFTLPTP</sequence>
<gene>
    <name evidence="8" type="primary">filI</name>
    <name evidence="12" type="ordered locus">Mhar_0446</name>
</gene>
<accession>E5KK10</accession>
<accession>G7WMP7</accession>